<proteinExistence type="evidence at protein level"/>
<dbReference type="EMBL" id="KY857877">
    <property type="protein sequence ID" value="ASU50679.1"/>
    <property type="molecule type" value="mRNA"/>
</dbReference>
<dbReference type="EMBL" id="AL139392">
    <property type="status" value="NOT_ANNOTATED_CDS"/>
    <property type="molecule type" value="Genomic_DNA"/>
</dbReference>
<dbReference type="CCDS" id="CCDS83093.1"/>
<dbReference type="RefSeq" id="NP_001302423.1">
    <property type="nucleotide sequence ID" value="NM_001315494.2"/>
</dbReference>
<dbReference type="RefSeq" id="NP_001334860.1">
    <property type="nucleotide sequence ID" value="NM_001347931.2"/>
</dbReference>
<dbReference type="RefSeq" id="XP_016865645.1">
    <property type="nucleotide sequence ID" value="XM_017010156.1"/>
</dbReference>
<dbReference type="RefSeq" id="XP_024302068.1">
    <property type="nucleotide sequence ID" value="XM_024446300.2"/>
</dbReference>
<dbReference type="SMR" id="A0A1B0GTQ4"/>
<dbReference type="FunCoup" id="A0A1B0GTQ4">
    <property type="interactions" value="8"/>
</dbReference>
<dbReference type="STRING" id="9606.ENSP00000490143"/>
<dbReference type="BioMuta" id="MYMX"/>
<dbReference type="jPOST" id="A0A1B0GTQ4"/>
<dbReference type="Antibodypedia" id="78826">
    <property type="antibodies" value="7 antibodies from 5 providers"/>
</dbReference>
<dbReference type="Ensembl" id="ENST00000573382.3">
    <property type="protein sequence ID" value="ENSP00000490143.1"/>
    <property type="gene ID" value="ENSG00000262179.4"/>
</dbReference>
<dbReference type="Ensembl" id="ENST00000576476.2">
    <property type="protein sequence ID" value="ENSP00000489797.1"/>
    <property type="gene ID" value="ENSG00000262179.4"/>
</dbReference>
<dbReference type="GeneID" id="101929726"/>
<dbReference type="KEGG" id="hsa:101929726"/>
<dbReference type="MANE-Select" id="ENST00000573382.3">
    <property type="protein sequence ID" value="ENSP00000490143.1"/>
    <property type="RefSeq nucleotide sequence ID" value="NM_001315494.2"/>
    <property type="RefSeq protein sequence ID" value="NP_001302423.1"/>
</dbReference>
<dbReference type="AGR" id="HGNC:52391"/>
<dbReference type="CTD" id="101929726"/>
<dbReference type="DisGeNET" id="101929726"/>
<dbReference type="GeneCards" id="MYMX"/>
<dbReference type="HGNC" id="HGNC:52391">
    <property type="gene designation" value="MYMX"/>
</dbReference>
<dbReference type="HPA" id="ENSG00000262179">
    <property type="expression patterns" value="Group enriched (adipose tissue, breast, pancreas, stomach)"/>
</dbReference>
<dbReference type="MalaCards" id="MYMX"/>
<dbReference type="MIM" id="619912">
    <property type="type" value="gene"/>
</dbReference>
<dbReference type="MIM" id="619941">
    <property type="type" value="phenotype"/>
</dbReference>
<dbReference type="neXtProt" id="NX_A0A1B0GTQ4"/>
<dbReference type="OpenTargets" id="ENSG00000262179"/>
<dbReference type="Orphanet" id="1358">
    <property type="disease" value="Carey-Fineman-Ziter syndrome"/>
</dbReference>
<dbReference type="VEuPathDB" id="HostDB:ENSG00000262179"/>
<dbReference type="GeneTree" id="ENSGT00490000044373"/>
<dbReference type="InParanoid" id="A0A1B0GTQ4"/>
<dbReference type="OMA" id="SHDMREA"/>
<dbReference type="OrthoDB" id="9539632at2759"/>
<dbReference type="PAN-GO" id="A0A1B0GTQ4">
    <property type="GO annotations" value="6 GO annotations based on evolutionary models"/>
</dbReference>
<dbReference type="PhylomeDB" id="A0A1B0GTQ4"/>
<dbReference type="BioGRID-ORCS" id="101929726">
    <property type="hits" value="0 hits in 11 CRISPR screens"/>
</dbReference>
<dbReference type="Pharos" id="A0A1B0GTQ4">
    <property type="development level" value="Tdark"/>
</dbReference>
<dbReference type="PRO" id="PR:A0A1B0GTQ4"/>
<dbReference type="Proteomes" id="UP000005640">
    <property type="component" value="Chromosome 6"/>
</dbReference>
<dbReference type="RNAct" id="A0A1B0GTQ4">
    <property type="molecule type" value="protein"/>
</dbReference>
<dbReference type="Bgee" id="ENSG00000262179">
    <property type="expression patterns" value="Expressed in primordial germ cell in gonad and 93 other cell types or tissues"/>
</dbReference>
<dbReference type="ExpressionAtlas" id="A0A1B0GTQ4">
    <property type="expression patterns" value="baseline and differential"/>
</dbReference>
<dbReference type="GO" id="GO:0005789">
    <property type="term" value="C:endoplasmic reticulum membrane"/>
    <property type="evidence" value="ECO:0000318"/>
    <property type="project" value="GO_Central"/>
</dbReference>
<dbReference type="GO" id="GO:0000139">
    <property type="term" value="C:Golgi membrane"/>
    <property type="evidence" value="ECO:0000318"/>
    <property type="project" value="GO_Central"/>
</dbReference>
<dbReference type="GO" id="GO:0005886">
    <property type="term" value="C:plasma membrane"/>
    <property type="evidence" value="ECO:0000250"/>
    <property type="project" value="UniProtKB"/>
</dbReference>
<dbReference type="GO" id="GO:0007520">
    <property type="term" value="P:myoblast fusion"/>
    <property type="evidence" value="ECO:0000316"/>
    <property type="project" value="UniProtKB"/>
</dbReference>
<dbReference type="GO" id="GO:0014905">
    <property type="term" value="P:myoblast fusion involved in skeletal muscle regeneration"/>
    <property type="evidence" value="ECO:0000315"/>
    <property type="project" value="UniProtKB"/>
</dbReference>
<dbReference type="GO" id="GO:0045026">
    <property type="term" value="P:plasma membrane fusion"/>
    <property type="evidence" value="ECO:0000250"/>
    <property type="project" value="UniProtKB"/>
</dbReference>
<dbReference type="GO" id="GO:0060538">
    <property type="term" value="P:skeletal muscle organ development"/>
    <property type="evidence" value="ECO:0000250"/>
    <property type="project" value="UniProtKB"/>
</dbReference>
<dbReference type="GO" id="GO:0043403">
    <property type="term" value="P:skeletal muscle tissue regeneration"/>
    <property type="evidence" value="ECO:0000250"/>
    <property type="project" value="UniProtKB"/>
</dbReference>
<dbReference type="CDD" id="cd20278">
    <property type="entry name" value="Minion"/>
    <property type="match status" value="1"/>
</dbReference>
<dbReference type="InterPro" id="IPR039014">
    <property type="entry name" value="Myomixer"/>
</dbReference>
<dbReference type="PANTHER" id="PTHR41686">
    <property type="entry name" value="MYOMIXER"/>
    <property type="match status" value="1"/>
</dbReference>
<dbReference type="PANTHER" id="PTHR41686:SF1">
    <property type="entry name" value="PROTEIN MYOMIXER"/>
    <property type="match status" value="1"/>
</dbReference>
<dbReference type="Pfam" id="PF21950">
    <property type="entry name" value="MINION"/>
    <property type="match status" value="1"/>
</dbReference>
<protein>
    <recommendedName>
        <fullName evidence="2">Protein myomixer</fullName>
    </recommendedName>
    <alternativeName>
        <fullName evidence="7">Microprotein inducer of fusion</fullName>
        <shortName evidence="7">Protein minion</shortName>
        <shortName evidence="7">hMINION</shortName>
    </alternativeName>
</protein>
<evidence type="ECO:0000250" key="1">
    <source>
        <dbReference type="UniProtKB" id="P0DP88"/>
    </source>
</evidence>
<evidence type="ECO:0000250" key="2">
    <source>
        <dbReference type="UniProtKB" id="Q2Q5T5"/>
    </source>
</evidence>
<evidence type="ECO:0000255" key="3"/>
<evidence type="ECO:0000256" key="4">
    <source>
        <dbReference type="SAM" id="MobiDB-lite"/>
    </source>
</evidence>
<evidence type="ECO:0000269" key="5">
    <source>
    </source>
</evidence>
<evidence type="ECO:0000269" key="6">
    <source>
    </source>
</evidence>
<evidence type="ECO:0000303" key="7">
    <source>
    </source>
</evidence>
<evidence type="ECO:0000305" key="8"/>
<evidence type="ECO:0000312" key="9">
    <source>
        <dbReference type="EMBL" id="ASU50679.1"/>
    </source>
</evidence>
<evidence type="ECO:0000312" key="10">
    <source>
        <dbReference type="HGNC" id="HGNC:52391"/>
    </source>
</evidence>
<sequence length="84" mass="9607">MPTPLLPLLLRLLLSCLLLPAARLARQYLLPLLRRLARRLGSQDMREALLGCLLFILSQRHSPDAGEASRVDRLERRERLGPQK</sequence>
<organism>
    <name type="scientific">Homo sapiens</name>
    <name type="common">Human</name>
    <dbReference type="NCBI Taxonomy" id="9606"/>
    <lineage>
        <taxon>Eukaryota</taxon>
        <taxon>Metazoa</taxon>
        <taxon>Chordata</taxon>
        <taxon>Craniata</taxon>
        <taxon>Vertebrata</taxon>
        <taxon>Euteleostomi</taxon>
        <taxon>Mammalia</taxon>
        <taxon>Eutheria</taxon>
        <taxon>Euarchontoglires</taxon>
        <taxon>Primates</taxon>
        <taxon>Haplorrhini</taxon>
        <taxon>Catarrhini</taxon>
        <taxon>Hominidae</taxon>
        <taxon>Homo</taxon>
    </lineage>
</organism>
<name>MYMX_HUMAN</name>
<accession>A0A1B0GTQ4</accession>
<accession>A0A223PZB9</accession>
<gene>
    <name evidence="10" type="primary">MYMX</name>
</gene>
<feature type="chain" id="PRO_5010077027" description="Protein myomixer">
    <location>
        <begin position="1"/>
        <end position="84"/>
    </location>
</feature>
<feature type="topological domain" description="Cytoplasmic" evidence="2">
    <location>
        <begin position="1"/>
        <end position="4"/>
    </location>
</feature>
<feature type="transmembrane region" description="Helical" evidence="3">
    <location>
        <begin position="5"/>
        <end position="25"/>
    </location>
</feature>
<feature type="topological domain" description="Extracellular" evidence="2">
    <location>
        <begin position="26"/>
        <end position="84"/>
    </location>
</feature>
<feature type="region of interest" description="Disordered" evidence="4">
    <location>
        <begin position="62"/>
        <end position="84"/>
    </location>
</feature>
<feature type="short sequence motif" description="AxLyCxL" evidence="1">
    <location>
        <begin position="48"/>
        <end position="57"/>
    </location>
</feature>
<feature type="sequence variant" id="VAR_087573" description="In CFZS2; skeletal muscle cells derived from the patient show abnormal myoblast fusion involved in skeletal muscle regeneration." evidence="6">
    <location>
        <begin position="46"/>
        <end position="84"/>
    </location>
</feature>
<reference evidence="9" key="1">
    <citation type="journal article" date="2017" name="Nat. Commun.">
        <title>The microprotein Minion controls cell fusion and muscle formation.</title>
        <authorList>
            <person name="Zhang Q."/>
            <person name="Vashisht A.A."/>
            <person name="O'Rourke J."/>
            <person name="Corbel S.Y."/>
            <person name="Moran R."/>
            <person name="Romero A."/>
            <person name="Miraglia L."/>
            <person name="Zhang J."/>
            <person name="Durrant E."/>
            <person name="Schmedt C."/>
            <person name="Sampath S.C."/>
            <person name="Sampath S.C."/>
        </authorList>
    </citation>
    <scope>NUCLEOTIDE SEQUENCE [MRNA]</scope>
    <scope>FUNCTION</scope>
</reference>
<reference key="2">
    <citation type="journal article" date="2003" name="Nature">
        <title>The DNA sequence and analysis of human chromosome 6.</title>
        <authorList>
            <person name="Mungall A.J."/>
            <person name="Palmer S.A."/>
            <person name="Sims S.K."/>
            <person name="Edwards C.A."/>
            <person name="Ashurst J.L."/>
            <person name="Wilming L."/>
            <person name="Jones M.C."/>
            <person name="Horton R."/>
            <person name="Hunt S.E."/>
            <person name="Scott C.E."/>
            <person name="Gilbert J.G.R."/>
            <person name="Clamp M.E."/>
            <person name="Bethel G."/>
            <person name="Milne S."/>
            <person name="Ainscough R."/>
            <person name="Almeida J.P."/>
            <person name="Ambrose K.D."/>
            <person name="Andrews T.D."/>
            <person name="Ashwell R.I.S."/>
            <person name="Babbage A.K."/>
            <person name="Bagguley C.L."/>
            <person name="Bailey J."/>
            <person name="Banerjee R."/>
            <person name="Barker D.J."/>
            <person name="Barlow K.F."/>
            <person name="Bates K."/>
            <person name="Beare D.M."/>
            <person name="Beasley H."/>
            <person name="Beasley O."/>
            <person name="Bird C.P."/>
            <person name="Blakey S.E."/>
            <person name="Bray-Allen S."/>
            <person name="Brook J."/>
            <person name="Brown A.J."/>
            <person name="Brown J.Y."/>
            <person name="Burford D.C."/>
            <person name="Burrill W."/>
            <person name="Burton J."/>
            <person name="Carder C."/>
            <person name="Carter N.P."/>
            <person name="Chapman J.C."/>
            <person name="Clark S.Y."/>
            <person name="Clark G."/>
            <person name="Clee C.M."/>
            <person name="Clegg S."/>
            <person name="Cobley V."/>
            <person name="Collier R.E."/>
            <person name="Collins J.E."/>
            <person name="Colman L.K."/>
            <person name="Corby N.R."/>
            <person name="Coville G.J."/>
            <person name="Culley K.M."/>
            <person name="Dhami P."/>
            <person name="Davies J."/>
            <person name="Dunn M."/>
            <person name="Earthrowl M.E."/>
            <person name="Ellington A.E."/>
            <person name="Evans K.A."/>
            <person name="Faulkner L."/>
            <person name="Francis M.D."/>
            <person name="Frankish A."/>
            <person name="Frankland J."/>
            <person name="French L."/>
            <person name="Garner P."/>
            <person name="Garnett J."/>
            <person name="Ghori M.J."/>
            <person name="Gilby L.M."/>
            <person name="Gillson C.J."/>
            <person name="Glithero R.J."/>
            <person name="Grafham D.V."/>
            <person name="Grant M."/>
            <person name="Gribble S."/>
            <person name="Griffiths C."/>
            <person name="Griffiths M.N.D."/>
            <person name="Hall R."/>
            <person name="Halls K.S."/>
            <person name="Hammond S."/>
            <person name="Harley J.L."/>
            <person name="Hart E.A."/>
            <person name="Heath P.D."/>
            <person name="Heathcott R."/>
            <person name="Holmes S.J."/>
            <person name="Howden P.J."/>
            <person name="Howe K.L."/>
            <person name="Howell G.R."/>
            <person name="Huckle E."/>
            <person name="Humphray S.J."/>
            <person name="Humphries M.D."/>
            <person name="Hunt A.R."/>
            <person name="Johnson C.M."/>
            <person name="Joy A.A."/>
            <person name="Kay M."/>
            <person name="Keenan S.J."/>
            <person name="Kimberley A.M."/>
            <person name="King A."/>
            <person name="Laird G.K."/>
            <person name="Langford C."/>
            <person name="Lawlor S."/>
            <person name="Leongamornlert D.A."/>
            <person name="Leversha M."/>
            <person name="Lloyd C.R."/>
            <person name="Lloyd D.M."/>
            <person name="Loveland J.E."/>
            <person name="Lovell J."/>
            <person name="Martin S."/>
            <person name="Mashreghi-Mohammadi M."/>
            <person name="Maslen G.L."/>
            <person name="Matthews L."/>
            <person name="McCann O.T."/>
            <person name="McLaren S.J."/>
            <person name="McLay K."/>
            <person name="McMurray A."/>
            <person name="Moore M.J.F."/>
            <person name="Mullikin J.C."/>
            <person name="Niblett D."/>
            <person name="Nickerson T."/>
            <person name="Novik K.L."/>
            <person name="Oliver K."/>
            <person name="Overton-Larty E.K."/>
            <person name="Parker A."/>
            <person name="Patel R."/>
            <person name="Pearce A.V."/>
            <person name="Peck A.I."/>
            <person name="Phillimore B.J.C.T."/>
            <person name="Phillips S."/>
            <person name="Plumb R.W."/>
            <person name="Porter K.M."/>
            <person name="Ramsey Y."/>
            <person name="Ranby S.A."/>
            <person name="Rice C.M."/>
            <person name="Ross M.T."/>
            <person name="Searle S.M."/>
            <person name="Sehra H.K."/>
            <person name="Sheridan E."/>
            <person name="Skuce C.D."/>
            <person name="Smith S."/>
            <person name="Smith M."/>
            <person name="Spraggon L."/>
            <person name="Squares S.L."/>
            <person name="Steward C.A."/>
            <person name="Sycamore N."/>
            <person name="Tamlyn-Hall G."/>
            <person name="Tester J."/>
            <person name="Theaker A.J."/>
            <person name="Thomas D.W."/>
            <person name="Thorpe A."/>
            <person name="Tracey A."/>
            <person name="Tromans A."/>
            <person name="Tubby B."/>
            <person name="Wall M."/>
            <person name="Wallis J.M."/>
            <person name="West A.P."/>
            <person name="White S.S."/>
            <person name="Whitehead S.L."/>
            <person name="Whittaker H."/>
            <person name="Wild A."/>
            <person name="Willey D.J."/>
            <person name="Wilmer T.E."/>
            <person name="Wood J.M."/>
            <person name="Wray P.W."/>
            <person name="Wyatt J.C."/>
            <person name="Young L."/>
            <person name="Younger R.M."/>
            <person name="Bentley D.R."/>
            <person name="Coulson A."/>
            <person name="Durbin R.M."/>
            <person name="Hubbard T."/>
            <person name="Sulston J.E."/>
            <person name="Dunham I."/>
            <person name="Rogers J."/>
            <person name="Beck S."/>
        </authorList>
    </citation>
    <scope>NUCLEOTIDE SEQUENCE [LARGE SCALE GENOMIC DNA]</scope>
</reference>
<reference key="3">
    <citation type="journal article" date="2022" name="J. Clin. Invest.">
        <title>Impaired activity of the fusogenic micropeptide Myomixer causes myopathy resembling Carey-Fineman-Ziter syndrome.</title>
        <authorList>
            <person name="Ramirez-Martinez A."/>
            <person name="Zhang Y."/>
            <person name="van den Boogaard M.J."/>
            <person name="McAnally J.R."/>
            <person name="Rodriguez-Caycedo C."/>
            <person name="Chai A.C."/>
            <person name="Chemello F."/>
            <person name="Massink M.P."/>
            <person name="Cuppen I."/>
            <person name="Elferink M.G."/>
            <person name="van Es R.J."/>
            <person name="Janssen N.G."/>
            <person name="Walraven-van Oijen L.P."/>
            <person name="Liu N."/>
            <person name="Bassel-Duby R."/>
            <person name="van Jaarsveld R.H."/>
            <person name="Olson E.N."/>
        </authorList>
    </citation>
    <scope>INVOLVEMENT IN CFZS2</scope>
    <scope>VARIANT CFZS2 46-ARG--LYS-84 DEL</scope>
    <scope>CHARACTERIZATION OF VARIANT CFZS2 46-ARG--LYS-84 DEL</scope>
    <scope>FUNCTION</scope>
</reference>
<comment type="function">
    <text evidence="2 5 6">Myoblast-specific protein that mediates myoblast fusion, an essential step for the formation of multi-nucleated muscle fibers (PubMed:28569745, PubMed:35642635). Involved in membrane fusion downstream of the lipid mixing step mediated by MYMK (By similarity). Acts by generating membrane stresses via its extracellular C-terminus, leading to drive fusion pore formation. Acts independently of MYMK (By similarity). Involved in skeletal muscle regeneration in response to injury by mediating the fusion of satellite cells, a population of muscle stem cells, with injured myofibers (By similarity).</text>
</comment>
<comment type="subunit">
    <text evidence="2">Interacts with MYMK.</text>
</comment>
<comment type="subcellular location">
    <subcellularLocation>
        <location evidence="2">Cell membrane</location>
        <topology evidence="2">Single-pass membrane protein</topology>
    </subcellularLocation>
</comment>
<comment type="domain">
    <text evidence="1">The AxLyCxL motif is required for myoblast fusion.</text>
</comment>
<comment type="disease" evidence="6">
    <disease id="DI-06467">
        <name>Carey-Fineman-Ziter syndrome 2</name>
        <acronym>CFZS2</acronym>
        <description>An autosomal recessive disorder characterized by weakness of the facial musculature, hypomimic facies, increased overbite, micrognathia, and facial dysmorphism. Some patients manifest failure to thrive, axial hypotonia, and progressive scoliosis.</description>
        <dbReference type="MIM" id="619941"/>
    </disease>
    <text>The disease may be caused by variants affecting the gene represented in this entry.</text>
</comment>
<comment type="similarity">
    <text evidence="8">Belongs to the MYMX family.</text>
</comment>
<keyword id="KW-1003">Cell membrane</keyword>
<keyword id="KW-0225">Disease variant</keyword>
<keyword id="KW-0472">Membrane</keyword>
<keyword id="KW-0517">Myogenesis</keyword>
<keyword id="KW-1185">Reference proteome</keyword>
<keyword id="KW-0812">Transmembrane</keyword>
<keyword id="KW-1133">Transmembrane helix</keyword>